<gene>
    <name type="ordered locus">PHG004</name>
</gene>
<geneLocation type="plasmid">
    <name>megaplasmid pHG1</name>
</geneLocation>
<name>Y7004_CUPNH</name>
<evidence type="ECO:0000305" key="1"/>
<proteinExistence type="predicted"/>
<dbReference type="EMBL" id="M96433">
    <property type="protein sequence ID" value="AAA16464.1"/>
    <property type="molecule type" value="Unassigned_DNA"/>
</dbReference>
<dbReference type="EMBL" id="AY305378">
    <property type="protein sequence ID" value="AAP85760.1"/>
    <property type="molecule type" value="Genomic_DNA"/>
</dbReference>
<dbReference type="PIR" id="D43255">
    <property type="entry name" value="D43255"/>
</dbReference>
<dbReference type="KEGG" id="reh:PHG004"/>
<dbReference type="HOGENOM" id="CLU_2286817_0_0_4"/>
<dbReference type="Proteomes" id="UP000008210">
    <property type="component" value="Plasmid megaplasmid pHG1"/>
</dbReference>
<protein>
    <recommendedName>
        <fullName>Uncharacterized protein PHG004</fullName>
    </recommendedName>
    <alternativeName>
        <fullName>ORF4</fullName>
    </alternativeName>
</protein>
<organism>
    <name type="scientific">Cupriavidus necator (strain ATCC 17699 / DSM 428 / KCTC 22496 / NCIMB 10442 / H16 / Stanier 337)</name>
    <name type="common">Ralstonia eutropha</name>
    <dbReference type="NCBI Taxonomy" id="381666"/>
    <lineage>
        <taxon>Bacteria</taxon>
        <taxon>Pseudomonadati</taxon>
        <taxon>Pseudomonadota</taxon>
        <taxon>Betaproteobacteria</taxon>
        <taxon>Burkholderiales</taxon>
        <taxon>Burkholderiaceae</taxon>
        <taxon>Cupriavidus</taxon>
    </lineage>
</organism>
<sequence>MQPKRSQAFVDTMHPLPEVLPSVWWHPGVSRRVSVHSGCFLSSHYLKPLGLSQPHARCLLRIAKRRLHEIINWNSRQAWKGACSSFRVSVARRTVHGSLFR</sequence>
<accession>P32757</accession>
<accession>Q7WXU4</accession>
<feature type="chain" id="PRO_0000066254" description="Uncharacterized protein PHG004">
    <location>
        <begin position="1"/>
        <end position="101"/>
    </location>
</feature>
<feature type="sequence conflict" description="In Ref. 1; AAA16464." evidence="1" ref="1">
    <original>E</original>
    <variation>D</variation>
    <location>
        <position position="69"/>
    </location>
</feature>
<keyword id="KW-0614">Plasmid</keyword>
<keyword id="KW-1185">Reference proteome</keyword>
<reference key="1">
    <citation type="journal article" date="1992" name="J. Bacteriol.">
        <title>A gene complex coding for the membrane-bound hydrogenase of Alcaligenes eutrophus H16.</title>
        <authorList>
            <person name="Kortlueke C."/>
            <person name="Horstmann K."/>
            <person name="Schwartz E."/>
            <person name="Rohde M."/>
            <person name="Binsack R."/>
            <person name="Friedrich B."/>
        </authorList>
    </citation>
    <scope>NUCLEOTIDE SEQUENCE [GENOMIC DNA]</scope>
</reference>
<reference key="2">
    <citation type="journal article" date="2003" name="J. Mol. Biol.">
        <title>Complete nucleotide sequence of pHG1: a Ralstonia eutropha H16 megaplasmid encoding key enzymes of H(2)-based lithoautotrophy and anaerobiosis.</title>
        <authorList>
            <person name="Schwartz E."/>
            <person name="Henne A."/>
            <person name="Cramm R."/>
            <person name="Eitinger T."/>
            <person name="Friedrich B."/>
            <person name="Gottschalk G."/>
        </authorList>
    </citation>
    <scope>NUCLEOTIDE SEQUENCE [LARGE SCALE GENOMIC DNA]</scope>
    <source>
        <strain>ATCC 17699 / DSM 428 / KCTC 22496 / NCIMB 10442 / H16 / Stanier 337</strain>
    </source>
</reference>